<evidence type="ECO:0000255" key="1">
    <source>
        <dbReference type="HAMAP-Rule" id="MF_01959"/>
    </source>
</evidence>
<evidence type="ECO:0000256" key="2">
    <source>
        <dbReference type="SAM" id="MobiDB-lite"/>
    </source>
</evidence>
<proteinExistence type="inferred from homology"/>
<protein>
    <recommendedName>
        <fullName evidence="1">Cytochrome c-type biogenesis protein CcmE</fullName>
    </recommendedName>
    <alternativeName>
        <fullName evidence="1">Cytochrome c maturation protein E</fullName>
    </alternativeName>
    <alternativeName>
        <fullName evidence="1">Heme chaperone CcmE</fullName>
    </alternativeName>
</protein>
<feature type="chain" id="PRO_1000189025" description="Cytochrome c-type biogenesis protein CcmE">
    <location>
        <begin position="1"/>
        <end position="177"/>
    </location>
</feature>
<feature type="topological domain" description="Cytoplasmic" evidence="1">
    <location>
        <begin position="1"/>
        <end position="8"/>
    </location>
</feature>
<feature type="transmembrane region" description="Helical; Signal-anchor for type II membrane protein" evidence="1">
    <location>
        <begin position="9"/>
        <end position="29"/>
    </location>
</feature>
<feature type="topological domain" description="Periplasmic" evidence="1">
    <location>
        <begin position="30"/>
        <end position="177"/>
    </location>
</feature>
<feature type="region of interest" description="Disordered" evidence="2">
    <location>
        <begin position="134"/>
        <end position="177"/>
    </location>
</feature>
<feature type="compositionally biased region" description="Basic and acidic residues" evidence="2">
    <location>
        <begin position="156"/>
        <end position="166"/>
    </location>
</feature>
<feature type="compositionally biased region" description="Polar residues" evidence="2">
    <location>
        <begin position="167"/>
        <end position="177"/>
    </location>
</feature>
<feature type="binding site" description="covalent" evidence="1">
    <location>
        <position position="131"/>
    </location>
    <ligand>
        <name>heme</name>
        <dbReference type="ChEBI" id="CHEBI:30413"/>
    </ligand>
</feature>
<feature type="binding site" description="axial binding residue" evidence="1">
    <location>
        <position position="135"/>
    </location>
    <ligand>
        <name>heme</name>
        <dbReference type="ChEBI" id="CHEBI:30413"/>
    </ligand>
    <ligandPart>
        <name>Fe</name>
        <dbReference type="ChEBI" id="CHEBI:18248"/>
    </ligandPart>
</feature>
<accession>B8F8J1</accession>
<name>CCME_GLAP5</name>
<gene>
    <name evidence="1" type="primary">ccmE</name>
    <name evidence="1" type="synonym">cycJ</name>
    <name type="ordered locus">HAPS_2211</name>
</gene>
<organism>
    <name type="scientific">Glaesserella parasuis serovar 5 (strain SH0165)</name>
    <name type="common">Haemophilus parasuis</name>
    <dbReference type="NCBI Taxonomy" id="557723"/>
    <lineage>
        <taxon>Bacteria</taxon>
        <taxon>Pseudomonadati</taxon>
        <taxon>Pseudomonadota</taxon>
        <taxon>Gammaproteobacteria</taxon>
        <taxon>Pasteurellales</taxon>
        <taxon>Pasteurellaceae</taxon>
        <taxon>Glaesserella</taxon>
    </lineage>
</organism>
<keyword id="KW-0997">Cell inner membrane</keyword>
<keyword id="KW-1003">Cell membrane</keyword>
<keyword id="KW-0201">Cytochrome c-type biogenesis</keyword>
<keyword id="KW-0349">Heme</keyword>
<keyword id="KW-0408">Iron</keyword>
<keyword id="KW-0472">Membrane</keyword>
<keyword id="KW-0479">Metal-binding</keyword>
<keyword id="KW-1185">Reference proteome</keyword>
<keyword id="KW-0735">Signal-anchor</keyword>
<keyword id="KW-0812">Transmembrane</keyword>
<keyword id="KW-1133">Transmembrane helix</keyword>
<dbReference type="EMBL" id="CP001321">
    <property type="protein sequence ID" value="ACL33643.1"/>
    <property type="molecule type" value="Genomic_DNA"/>
</dbReference>
<dbReference type="RefSeq" id="WP_005710526.1">
    <property type="nucleotide sequence ID" value="NC_011852.1"/>
</dbReference>
<dbReference type="SMR" id="B8F8J1"/>
<dbReference type="STRING" id="557723.HAPS_2211"/>
<dbReference type="KEGG" id="hap:HAPS_2211"/>
<dbReference type="HOGENOM" id="CLU_079503_1_0_6"/>
<dbReference type="Proteomes" id="UP000006743">
    <property type="component" value="Chromosome"/>
</dbReference>
<dbReference type="GO" id="GO:0005886">
    <property type="term" value="C:plasma membrane"/>
    <property type="evidence" value="ECO:0007669"/>
    <property type="project" value="UniProtKB-SubCell"/>
</dbReference>
<dbReference type="GO" id="GO:0020037">
    <property type="term" value="F:heme binding"/>
    <property type="evidence" value="ECO:0007669"/>
    <property type="project" value="InterPro"/>
</dbReference>
<dbReference type="GO" id="GO:0046872">
    <property type="term" value="F:metal ion binding"/>
    <property type="evidence" value="ECO:0007669"/>
    <property type="project" value="UniProtKB-KW"/>
</dbReference>
<dbReference type="GO" id="GO:0017004">
    <property type="term" value="P:cytochrome complex assembly"/>
    <property type="evidence" value="ECO:0007669"/>
    <property type="project" value="UniProtKB-KW"/>
</dbReference>
<dbReference type="FunFam" id="2.40.50.140:FF:000104">
    <property type="entry name" value="Cytochrome c-type biogenesis protein CcmE"/>
    <property type="match status" value="1"/>
</dbReference>
<dbReference type="Gene3D" id="2.40.50.140">
    <property type="entry name" value="Nucleic acid-binding proteins"/>
    <property type="match status" value="1"/>
</dbReference>
<dbReference type="HAMAP" id="MF_01959">
    <property type="entry name" value="CcmE"/>
    <property type="match status" value="1"/>
</dbReference>
<dbReference type="InterPro" id="IPR004329">
    <property type="entry name" value="CcmE"/>
</dbReference>
<dbReference type="InterPro" id="IPR036127">
    <property type="entry name" value="CcmE-like_sf"/>
</dbReference>
<dbReference type="InterPro" id="IPR012340">
    <property type="entry name" value="NA-bd_OB-fold"/>
</dbReference>
<dbReference type="NCBIfam" id="NF009638">
    <property type="entry name" value="PRK13165.1"/>
    <property type="match status" value="1"/>
</dbReference>
<dbReference type="NCBIfam" id="NF009727">
    <property type="entry name" value="PRK13254.1-1"/>
    <property type="match status" value="1"/>
</dbReference>
<dbReference type="NCBIfam" id="NF009729">
    <property type="entry name" value="PRK13254.1-3"/>
    <property type="match status" value="1"/>
</dbReference>
<dbReference type="NCBIfam" id="NF009731">
    <property type="entry name" value="PRK13254.1-5"/>
    <property type="match status" value="1"/>
</dbReference>
<dbReference type="PANTHER" id="PTHR34128">
    <property type="entry name" value="CYTOCHROME C-TYPE BIOGENESIS PROTEIN CCME HOMOLOG, MITOCHONDRIAL"/>
    <property type="match status" value="1"/>
</dbReference>
<dbReference type="PANTHER" id="PTHR34128:SF2">
    <property type="entry name" value="CYTOCHROME C-TYPE BIOGENESIS PROTEIN CCME HOMOLOG, MITOCHONDRIAL"/>
    <property type="match status" value="1"/>
</dbReference>
<dbReference type="Pfam" id="PF03100">
    <property type="entry name" value="CcmE"/>
    <property type="match status" value="1"/>
</dbReference>
<dbReference type="SUPFAM" id="SSF82093">
    <property type="entry name" value="Heme chaperone CcmE"/>
    <property type="match status" value="1"/>
</dbReference>
<reference key="1">
    <citation type="journal article" date="2009" name="J. Bacteriol.">
        <title>Complete genome sequence of Haemophilus parasuis SH0165.</title>
        <authorList>
            <person name="Yue M."/>
            <person name="Yang F."/>
            <person name="Yang J."/>
            <person name="Bei W."/>
            <person name="Cai X."/>
            <person name="Chen L."/>
            <person name="Dong J."/>
            <person name="Zhou R."/>
            <person name="Jin M."/>
            <person name="Jin Q."/>
            <person name="Chen H."/>
        </authorList>
    </citation>
    <scope>NUCLEOTIDE SEQUENCE [LARGE SCALE GENOMIC DNA]</scope>
    <source>
        <strain>SH0165</strain>
    </source>
</reference>
<comment type="function">
    <text evidence="1">Heme chaperone required for the biogenesis of c-type cytochromes. Transiently binds heme delivered by CcmC and transfers the heme to apo-cytochromes in a process facilitated by CcmF and CcmH.</text>
</comment>
<comment type="subcellular location">
    <subcellularLocation>
        <location evidence="1">Cell inner membrane</location>
        <topology evidence="1">Single-pass type II membrane protein</topology>
        <orientation evidence="1">Periplasmic side</orientation>
    </subcellularLocation>
</comment>
<comment type="similarity">
    <text evidence="1">Belongs to the CcmE/CycJ family.</text>
</comment>
<sequence length="177" mass="19523">MNPRRKSRLKVVMAVLSGLAVAVGLTLYALSQNIDLFYTPSEIIYGKNNDPETKPEVGQRIRVGGMVVDGSVKRDDKTLKVTFDLNDIGPAIQVEYEGILPDLFREGQGIVAQGTLVEPTKLKATEVLAKHDENYMPPELGDQMKKQHQPMGISEADLKGKSERDATQISQPFGENK</sequence>